<proteinExistence type="inferred from homology"/>
<comment type="function">
    <text evidence="1">Catalyzes the reversible reaction in which hydroxymethyl group from 5,10-methylenetetrahydrofolate is transferred onto alpha-ketoisovalerate to form ketopantoate.</text>
</comment>
<comment type="catalytic activity">
    <reaction evidence="1">
        <text>3-methyl-2-oxobutanoate + (6R)-5,10-methylene-5,6,7,8-tetrahydrofolate + H2O = 2-dehydropantoate + (6S)-5,6,7,8-tetrahydrofolate</text>
        <dbReference type="Rhea" id="RHEA:11824"/>
        <dbReference type="ChEBI" id="CHEBI:11561"/>
        <dbReference type="ChEBI" id="CHEBI:11851"/>
        <dbReference type="ChEBI" id="CHEBI:15377"/>
        <dbReference type="ChEBI" id="CHEBI:15636"/>
        <dbReference type="ChEBI" id="CHEBI:57453"/>
        <dbReference type="EC" id="2.1.2.11"/>
    </reaction>
</comment>
<comment type="cofactor">
    <cofactor evidence="1">
        <name>Mg(2+)</name>
        <dbReference type="ChEBI" id="CHEBI:18420"/>
    </cofactor>
    <text evidence="1">Binds 1 Mg(2+) ion per subunit.</text>
</comment>
<comment type="pathway">
    <text evidence="1">Cofactor biosynthesis; (R)-pantothenate biosynthesis; (R)-pantoate from 3-methyl-2-oxobutanoate: step 1/2.</text>
</comment>
<comment type="subunit">
    <text evidence="1">Homodecamer; pentamer of dimers.</text>
</comment>
<comment type="subcellular location">
    <subcellularLocation>
        <location evidence="1">Cytoplasm</location>
    </subcellularLocation>
</comment>
<comment type="similarity">
    <text evidence="1">Belongs to the PanB family.</text>
</comment>
<evidence type="ECO:0000255" key="1">
    <source>
        <dbReference type="HAMAP-Rule" id="MF_00156"/>
    </source>
</evidence>
<gene>
    <name evidence="1" type="primary">panB</name>
    <name type="ordered locus">Sfum_2737</name>
</gene>
<protein>
    <recommendedName>
        <fullName evidence="1">3-methyl-2-oxobutanoate hydroxymethyltransferase</fullName>
        <ecNumber evidence="1">2.1.2.11</ecNumber>
    </recommendedName>
    <alternativeName>
        <fullName evidence="1">Ketopantoate hydroxymethyltransferase</fullName>
        <shortName evidence="1">KPHMT</shortName>
    </alternativeName>
</protein>
<name>PANB_SYNFM</name>
<organism>
    <name type="scientific">Syntrophobacter fumaroxidans (strain DSM 10017 / MPOB)</name>
    <dbReference type="NCBI Taxonomy" id="335543"/>
    <lineage>
        <taxon>Bacteria</taxon>
        <taxon>Pseudomonadati</taxon>
        <taxon>Thermodesulfobacteriota</taxon>
        <taxon>Syntrophobacteria</taxon>
        <taxon>Syntrophobacterales</taxon>
        <taxon>Syntrophobacteraceae</taxon>
        <taxon>Syntrophobacter</taxon>
    </lineage>
</organism>
<accession>A0LLW3</accession>
<dbReference type="EC" id="2.1.2.11" evidence="1"/>
<dbReference type="EMBL" id="CP000478">
    <property type="protein sequence ID" value="ABK18415.1"/>
    <property type="molecule type" value="Genomic_DNA"/>
</dbReference>
<dbReference type="RefSeq" id="WP_011699582.1">
    <property type="nucleotide sequence ID" value="NC_008554.1"/>
</dbReference>
<dbReference type="SMR" id="A0LLW3"/>
<dbReference type="FunCoup" id="A0LLW3">
    <property type="interactions" value="461"/>
</dbReference>
<dbReference type="STRING" id="335543.Sfum_2737"/>
<dbReference type="KEGG" id="sfu:Sfum_2737"/>
<dbReference type="eggNOG" id="COG0413">
    <property type="taxonomic scope" value="Bacteria"/>
</dbReference>
<dbReference type="HOGENOM" id="CLU_036645_1_0_7"/>
<dbReference type="InParanoid" id="A0LLW3"/>
<dbReference type="OrthoDB" id="9781789at2"/>
<dbReference type="UniPathway" id="UPA00028">
    <property type="reaction ID" value="UER00003"/>
</dbReference>
<dbReference type="Proteomes" id="UP000001784">
    <property type="component" value="Chromosome"/>
</dbReference>
<dbReference type="GO" id="GO:0005737">
    <property type="term" value="C:cytoplasm"/>
    <property type="evidence" value="ECO:0007669"/>
    <property type="project" value="UniProtKB-SubCell"/>
</dbReference>
<dbReference type="GO" id="GO:0003864">
    <property type="term" value="F:3-methyl-2-oxobutanoate hydroxymethyltransferase activity"/>
    <property type="evidence" value="ECO:0007669"/>
    <property type="project" value="UniProtKB-UniRule"/>
</dbReference>
<dbReference type="GO" id="GO:0000287">
    <property type="term" value="F:magnesium ion binding"/>
    <property type="evidence" value="ECO:0007669"/>
    <property type="project" value="TreeGrafter"/>
</dbReference>
<dbReference type="GO" id="GO:0015940">
    <property type="term" value="P:pantothenate biosynthetic process"/>
    <property type="evidence" value="ECO:0007669"/>
    <property type="project" value="UniProtKB-UniRule"/>
</dbReference>
<dbReference type="CDD" id="cd06557">
    <property type="entry name" value="KPHMT-like"/>
    <property type="match status" value="1"/>
</dbReference>
<dbReference type="FunFam" id="3.20.20.60:FF:000003">
    <property type="entry name" value="3-methyl-2-oxobutanoate hydroxymethyltransferase"/>
    <property type="match status" value="1"/>
</dbReference>
<dbReference type="Gene3D" id="3.20.20.60">
    <property type="entry name" value="Phosphoenolpyruvate-binding domains"/>
    <property type="match status" value="1"/>
</dbReference>
<dbReference type="HAMAP" id="MF_00156">
    <property type="entry name" value="PanB"/>
    <property type="match status" value="1"/>
</dbReference>
<dbReference type="InterPro" id="IPR003700">
    <property type="entry name" value="Pantoate_hydroxy_MeTrfase"/>
</dbReference>
<dbReference type="InterPro" id="IPR015813">
    <property type="entry name" value="Pyrv/PenolPyrv_kinase-like_dom"/>
</dbReference>
<dbReference type="InterPro" id="IPR040442">
    <property type="entry name" value="Pyrv_kinase-like_dom_sf"/>
</dbReference>
<dbReference type="NCBIfam" id="TIGR00222">
    <property type="entry name" value="panB"/>
    <property type="match status" value="1"/>
</dbReference>
<dbReference type="NCBIfam" id="NF001452">
    <property type="entry name" value="PRK00311.1"/>
    <property type="match status" value="1"/>
</dbReference>
<dbReference type="PANTHER" id="PTHR20881">
    <property type="entry name" value="3-METHYL-2-OXOBUTANOATE HYDROXYMETHYLTRANSFERASE"/>
    <property type="match status" value="1"/>
</dbReference>
<dbReference type="PANTHER" id="PTHR20881:SF0">
    <property type="entry name" value="3-METHYL-2-OXOBUTANOATE HYDROXYMETHYLTRANSFERASE"/>
    <property type="match status" value="1"/>
</dbReference>
<dbReference type="Pfam" id="PF02548">
    <property type="entry name" value="Pantoate_transf"/>
    <property type="match status" value="1"/>
</dbReference>
<dbReference type="PIRSF" id="PIRSF000388">
    <property type="entry name" value="Pantoate_hydroxy_MeTrfase"/>
    <property type="match status" value="1"/>
</dbReference>
<dbReference type="SUPFAM" id="SSF51621">
    <property type="entry name" value="Phosphoenolpyruvate/pyruvate domain"/>
    <property type="match status" value="1"/>
</dbReference>
<sequence>MKNRVTVPEIIASKGKRKLSELTAYDYPTALWADQSGIDMLLVGDSLAMVVLGHDDTLSVGMTEMLHHTSAVARGAKRALVIGDMPFMSYQVSVEEALYNAGLFLKEAKAQAVKLEGGRRVAPQVKAMVEAGIPVQGHLGLTPQSSAQFGGFKIQGKTAEAAKILIEDAQILAEAGCFSIVLEGIPSNVAAMVTEAIPVPTIGIGAGPDCDGQVLVIHDVLGLYDRFVPKFVKKYAQLGLTIKEALTKYREEVENGTFPGPEHEFGMAELEAKKLSGLEDKK</sequence>
<feature type="chain" id="PRO_0000297395" description="3-methyl-2-oxobutanoate hydroxymethyltransferase">
    <location>
        <begin position="1"/>
        <end position="282"/>
    </location>
</feature>
<feature type="active site" description="Proton acceptor" evidence="1">
    <location>
        <position position="183"/>
    </location>
</feature>
<feature type="binding site" evidence="1">
    <location>
        <begin position="45"/>
        <end position="46"/>
    </location>
    <ligand>
        <name>3-methyl-2-oxobutanoate</name>
        <dbReference type="ChEBI" id="CHEBI:11851"/>
    </ligand>
</feature>
<feature type="binding site" evidence="1">
    <location>
        <position position="45"/>
    </location>
    <ligand>
        <name>Mg(2+)</name>
        <dbReference type="ChEBI" id="CHEBI:18420"/>
    </ligand>
</feature>
<feature type="binding site" evidence="1">
    <location>
        <position position="84"/>
    </location>
    <ligand>
        <name>3-methyl-2-oxobutanoate</name>
        <dbReference type="ChEBI" id="CHEBI:11851"/>
    </ligand>
</feature>
<feature type="binding site" evidence="1">
    <location>
        <position position="84"/>
    </location>
    <ligand>
        <name>Mg(2+)</name>
        <dbReference type="ChEBI" id="CHEBI:18420"/>
    </ligand>
</feature>
<feature type="binding site" evidence="1">
    <location>
        <position position="114"/>
    </location>
    <ligand>
        <name>3-methyl-2-oxobutanoate</name>
        <dbReference type="ChEBI" id="CHEBI:11851"/>
    </ligand>
</feature>
<feature type="binding site" evidence="1">
    <location>
        <position position="116"/>
    </location>
    <ligand>
        <name>Mg(2+)</name>
        <dbReference type="ChEBI" id="CHEBI:18420"/>
    </ligand>
</feature>
<reference key="1">
    <citation type="submission" date="2006-10" db="EMBL/GenBank/DDBJ databases">
        <title>Complete sequence of Syntrophobacter fumaroxidans MPOB.</title>
        <authorList>
            <consortium name="US DOE Joint Genome Institute"/>
            <person name="Copeland A."/>
            <person name="Lucas S."/>
            <person name="Lapidus A."/>
            <person name="Barry K."/>
            <person name="Detter J.C."/>
            <person name="Glavina del Rio T."/>
            <person name="Hammon N."/>
            <person name="Israni S."/>
            <person name="Pitluck S."/>
            <person name="Goltsman E.G."/>
            <person name="Martinez M."/>
            <person name="Schmutz J."/>
            <person name="Larimer F."/>
            <person name="Land M."/>
            <person name="Hauser L."/>
            <person name="Kyrpides N."/>
            <person name="Kim E."/>
            <person name="Boone D.R."/>
            <person name="Brockman F."/>
            <person name="Culley D."/>
            <person name="Ferry J."/>
            <person name="Gunsalus R."/>
            <person name="McInerney M.J."/>
            <person name="Morrison M."/>
            <person name="Plugge C."/>
            <person name="Rohlin L."/>
            <person name="Scholten J."/>
            <person name="Sieber J."/>
            <person name="Stams A.J.M."/>
            <person name="Worm P."/>
            <person name="Henstra A.M."/>
            <person name="Richardson P."/>
        </authorList>
    </citation>
    <scope>NUCLEOTIDE SEQUENCE [LARGE SCALE GENOMIC DNA]</scope>
    <source>
        <strain>DSM 10017 / MPOB</strain>
    </source>
</reference>
<keyword id="KW-0963">Cytoplasm</keyword>
<keyword id="KW-0460">Magnesium</keyword>
<keyword id="KW-0479">Metal-binding</keyword>
<keyword id="KW-0566">Pantothenate biosynthesis</keyword>
<keyword id="KW-1185">Reference proteome</keyword>
<keyword id="KW-0808">Transferase</keyword>